<gene>
    <name evidence="1" type="primary">prfA</name>
    <name type="ordered locus">Anae109_4213</name>
</gene>
<name>RF1_ANADF</name>
<dbReference type="EMBL" id="CP000769">
    <property type="protein sequence ID" value="ABS28391.1"/>
    <property type="molecule type" value="Genomic_DNA"/>
</dbReference>
<dbReference type="RefSeq" id="WP_012099034.1">
    <property type="nucleotide sequence ID" value="NC_009675.1"/>
</dbReference>
<dbReference type="SMR" id="A7HI45"/>
<dbReference type="STRING" id="404589.Anae109_4213"/>
<dbReference type="KEGG" id="afw:Anae109_4213"/>
<dbReference type="eggNOG" id="COG0216">
    <property type="taxonomic scope" value="Bacteria"/>
</dbReference>
<dbReference type="HOGENOM" id="CLU_036856_0_1_7"/>
<dbReference type="OrthoDB" id="9806673at2"/>
<dbReference type="Proteomes" id="UP000006382">
    <property type="component" value="Chromosome"/>
</dbReference>
<dbReference type="GO" id="GO:0005737">
    <property type="term" value="C:cytoplasm"/>
    <property type="evidence" value="ECO:0007669"/>
    <property type="project" value="UniProtKB-SubCell"/>
</dbReference>
<dbReference type="GO" id="GO:0016149">
    <property type="term" value="F:translation release factor activity, codon specific"/>
    <property type="evidence" value="ECO:0007669"/>
    <property type="project" value="UniProtKB-UniRule"/>
</dbReference>
<dbReference type="FunFam" id="3.30.160.20:FF:000004">
    <property type="entry name" value="Peptide chain release factor 1"/>
    <property type="match status" value="1"/>
</dbReference>
<dbReference type="FunFam" id="3.30.70.1660:FF:000002">
    <property type="entry name" value="Peptide chain release factor 1"/>
    <property type="match status" value="1"/>
</dbReference>
<dbReference type="FunFam" id="3.30.70.1660:FF:000004">
    <property type="entry name" value="Peptide chain release factor 1"/>
    <property type="match status" value="1"/>
</dbReference>
<dbReference type="Gene3D" id="3.30.160.20">
    <property type="match status" value="1"/>
</dbReference>
<dbReference type="Gene3D" id="3.30.70.1660">
    <property type="match status" value="2"/>
</dbReference>
<dbReference type="Gene3D" id="6.10.140.1950">
    <property type="match status" value="1"/>
</dbReference>
<dbReference type="HAMAP" id="MF_00093">
    <property type="entry name" value="Rel_fac_1"/>
    <property type="match status" value="1"/>
</dbReference>
<dbReference type="InterPro" id="IPR005139">
    <property type="entry name" value="PCRF"/>
</dbReference>
<dbReference type="InterPro" id="IPR000352">
    <property type="entry name" value="Pep_chain_release_fac_I"/>
</dbReference>
<dbReference type="InterPro" id="IPR045853">
    <property type="entry name" value="Pep_chain_release_fac_I_sf"/>
</dbReference>
<dbReference type="InterPro" id="IPR050057">
    <property type="entry name" value="Prokaryotic/Mito_RF"/>
</dbReference>
<dbReference type="InterPro" id="IPR004373">
    <property type="entry name" value="RF-1"/>
</dbReference>
<dbReference type="NCBIfam" id="TIGR00019">
    <property type="entry name" value="prfA"/>
    <property type="match status" value="1"/>
</dbReference>
<dbReference type="NCBIfam" id="NF001859">
    <property type="entry name" value="PRK00591.1"/>
    <property type="match status" value="1"/>
</dbReference>
<dbReference type="PANTHER" id="PTHR43804">
    <property type="entry name" value="LD18447P"/>
    <property type="match status" value="1"/>
</dbReference>
<dbReference type="PANTHER" id="PTHR43804:SF7">
    <property type="entry name" value="LD18447P"/>
    <property type="match status" value="1"/>
</dbReference>
<dbReference type="Pfam" id="PF03462">
    <property type="entry name" value="PCRF"/>
    <property type="match status" value="1"/>
</dbReference>
<dbReference type="Pfam" id="PF00472">
    <property type="entry name" value="RF-1"/>
    <property type="match status" value="1"/>
</dbReference>
<dbReference type="SMART" id="SM00937">
    <property type="entry name" value="PCRF"/>
    <property type="match status" value="1"/>
</dbReference>
<dbReference type="SUPFAM" id="SSF75620">
    <property type="entry name" value="Release factor"/>
    <property type="match status" value="1"/>
</dbReference>
<dbReference type="PROSITE" id="PS00745">
    <property type="entry name" value="RF_PROK_I"/>
    <property type="match status" value="1"/>
</dbReference>
<organism>
    <name type="scientific">Anaeromyxobacter sp. (strain Fw109-5)</name>
    <dbReference type="NCBI Taxonomy" id="404589"/>
    <lineage>
        <taxon>Bacteria</taxon>
        <taxon>Pseudomonadati</taxon>
        <taxon>Myxococcota</taxon>
        <taxon>Myxococcia</taxon>
        <taxon>Myxococcales</taxon>
        <taxon>Cystobacterineae</taxon>
        <taxon>Anaeromyxobacteraceae</taxon>
        <taxon>Anaeromyxobacter</taxon>
    </lineage>
</organism>
<sequence>MLSQEVLKKLEAIEQRFEELTALLSDPSVASNGDRFRKVSKERASLEPTVEALRAYRKLVTDIGDNEALLEEKDPDLREMAKEELAQLRPQVDPAEEQLKLYLVPKDPADEKDVILEIRAGAGGDEAGLFAAELLRMYLRYAERRGWRTEVADTSAGNLGGVKDVTVNIAGDSVYSWLKFESGVHRVQRVPATEAQGRIHTSTVTVAVMPEAEDIDIQVSPADIEMDVFRSTGSGGQSVNTTDSAVRLTHKPTGIIVKCQQEKSQLKNRNMAMRMLRAKLYEIELERQRSARDAARKSQVGTGDRSEKIRTYNFPQDRLTDHRINYTRHNLPAVMDGDVQDVIDACRTFYAAQALREASRGNAADGAAERRA</sequence>
<feature type="chain" id="PRO_1000004857" description="Peptide chain release factor 1">
    <location>
        <begin position="1"/>
        <end position="372"/>
    </location>
</feature>
<feature type="modified residue" description="N5-methylglutamine" evidence="1">
    <location>
        <position position="237"/>
    </location>
</feature>
<proteinExistence type="inferred from homology"/>
<keyword id="KW-0963">Cytoplasm</keyword>
<keyword id="KW-0488">Methylation</keyword>
<keyword id="KW-0648">Protein biosynthesis</keyword>
<keyword id="KW-1185">Reference proteome</keyword>
<comment type="function">
    <text evidence="1">Peptide chain release factor 1 directs the termination of translation in response to the peptide chain termination codons UAG and UAA.</text>
</comment>
<comment type="subcellular location">
    <subcellularLocation>
        <location evidence="1">Cytoplasm</location>
    </subcellularLocation>
</comment>
<comment type="PTM">
    <text evidence="1">Methylated by PrmC. Methylation increases the termination efficiency of RF1.</text>
</comment>
<comment type="similarity">
    <text evidence="1">Belongs to the prokaryotic/mitochondrial release factor family.</text>
</comment>
<protein>
    <recommendedName>
        <fullName evidence="1">Peptide chain release factor 1</fullName>
        <shortName evidence="1">RF-1</shortName>
    </recommendedName>
</protein>
<accession>A7HI45</accession>
<evidence type="ECO:0000255" key="1">
    <source>
        <dbReference type="HAMAP-Rule" id="MF_00093"/>
    </source>
</evidence>
<reference key="1">
    <citation type="journal article" date="2015" name="Genome Announc.">
        <title>Complete genome sequence of Anaeromyxobacter sp. Fw109-5, an anaerobic, metal-reducing bacterium isolated from a contaminated subsurface environment.</title>
        <authorList>
            <person name="Hwang C."/>
            <person name="Copeland A."/>
            <person name="Lucas S."/>
            <person name="Lapidus A."/>
            <person name="Barry K."/>
            <person name="Glavina Del Rio T."/>
            <person name="Dalin E."/>
            <person name="Tice H."/>
            <person name="Pitluck S."/>
            <person name="Sims D."/>
            <person name="Brettin T."/>
            <person name="Bruce D.C."/>
            <person name="Detter J.C."/>
            <person name="Han C.S."/>
            <person name="Schmutz J."/>
            <person name="Larimer F.W."/>
            <person name="Land M.L."/>
            <person name="Hauser L.J."/>
            <person name="Kyrpides N."/>
            <person name="Lykidis A."/>
            <person name="Richardson P."/>
            <person name="Belieav A."/>
            <person name="Sanford R.A."/>
            <person name="Loeffler F.E."/>
            <person name="Fields M.W."/>
        </authorList>
    </citation>
    <scope>NUCLEOTIDE SEQUENCE [LARGE SCALE GENOMIC DNA]</scope>
    <source>
        <strain>Fw109-5</strain>
    </source>
</reference>